<gene>
    <name evidence="1" type="primary">gmd</name>
    <name type="ordered locus">SF2116</name>
    <name type="ordered locus">S2239</name>
</gene>
<reference key="1">
    <citation type="journal article" date="2002" name="Nucleic Acids Res.">
        <title>Genome sequence of Shigella flexneri 2a: insights into pathogenicity through comparison with genomes of Escherichia coli K12 and O157.</title>
        <authorList>
            <person name="Jin Q."/>
            <person name="Yuan Z."/>
            <person name="Xu J."/>
            <person name="Wang Y."/>
            <person name="Shen Y."/>
            <person name="Lu W."/>
            <person name="Wang J."/>
            <person name="Liu H."/>
            <person name="Yang J."/>
            <person name="Yang F."/>
            <person name="Zhang X."/>
            <person name="Zhang J."/>
            <person name="Yang G."/>
            <person name="Wu H."/>
            <person name="Qu D."/>
            <person name="Dong J."/>
            <person name="Sun L."/>
            <person name="Xue Y."/>
            <person name="Zhao A."/>
            <person name="Gao Y."/>
            <person name="Zhu J."/>
            <person name="Kan B."/>
            <person name="Ding K."/>
            <person name="Chen S."/>
            <person name="Cheng H."/>
            <person name="Yao Z."/>
            <person name="He B."/>
            <person name="Chen R."/>
            <person name="Ma D."/>
            <person name="Qiang B."/>
            <person name="Wen Y."/>
            <person name="Hou Y."/>
            <person name="Yu J."/>
        </authorList>
    </citation>
    <scope>NUCLEOTIDE SEQUENCE [LARGE SCALE GENOMIC DNA]</scope>
    <source>
        <strain>301 / Serotype 2a</strain>
    </source>
</reference>
<reference key="2">
    <citation type="journal article" date="2003" name="Infect. Immun.">
        <title>Complete genome sequence and comparative genomics of Shigella flexneri serotype 2a strain 2457T.</title>
        <authorList>
            <person name="Wei J."/>
            <person name="Goldberg M.B."/>
            <person name="Burland V."/>
            <person name="Venkatesan M.M."/>
            <person name="Deng W."/>
            <person name="Fournier G."/>
            <person name="Mayhew G.F."/>
            <person name="Plunkett G. III"/>
            <person name="Rose D.J."/>
            <person name="Darling A."/>
            <person name="Mau B."/>
            <person name="Perna N.T."/>
            <person name="Payne S.M."/>
            <person name="Runyen-Janecky L.J."/>
            <person name="Zhou S."/>
            <person name="Schwartz D.C."/>
            <person name="Blattner F.R."/>
        </authorList>
    </citation>
    <scope>NUCLEOTIDE SEQUENCE [LARGE SCALE GENOMIC DNA]</scope>
    <source>
        <strain>ATCC 700930 / 2457T / Serotype 2a</strain>
    </source>
</reference>
<feature type="chain" id="PRO_0000201716" description="GDP-mannose 4,6-dehydratase">
    <location>
        <begin position="1"/>
        <end position="373"/>
    </location>
</feature>
<feature type="active site" evidence="1">
    <location>
        <position position="133"/>
    </location>
</feature>
<feature type="active site" description="Nucleophile" evidence="1">
    <location>
        <position position="135"/>
    </location>
</feature>
<feature type="active site" description="Nucleophile" evidence="1">
    <location>
        <position position="157"/>
    </location>
</feature>
<feature type="binding site" evidence="1">
    <location>
        <begin position="9"/>
        <end position="14"/>
    </location>
    <ligand>
        <name>NADP(+)</name>
        <dbReference type="ChEBI" id="CHEBI:58349"/>
    </ligand>
</feature>
<feature type="binding site" evidence="1">
    <location>
        <begin position="64"/>
        <end position="65"/>
    </location>
    <ligand>
        <name>NADP(+)</name>
        <dbReference type="ChEBI" id="CHEBI:58349"/>
    </ligand>
</feature>
<feature type="binding site" evidence="1">
    <location>
        <begin position="86"/>
        <end position="90"/>
    </location>
    <ligand>
        <name>NADP(+)</name>
        <dbReference type="ChEBI" id="CHEBI:58349"/>
    </ligand>
</feature>
<feature type="binding site" evidence="1">
    <location>
        <position position="101"/>
    </location>
    <ligand>
        <name>NADP(+)</name>
        <dbReference type="ChEBI" id="CHEBI:58349"/>
    </ligand>
</feature>
<feature type="binding site" evidence="1">
    <location>
        <position position="161"/>
    </location>
    <ligand>
        <name>NADP(+)</name>
        <dbReference type="ChEBI" id="CHEBI:58349"/>
    </ligand>
</feature>
<feature type="binding site" evidence="1">
    <location>
        <position position="187"/>
    </location>
    <ligand>
        <name>NADP(+)</name>
        <dbReference type="ChEBI" id="CHEBI:58349"/>
    </ligand>
</feature>
<feature type="binding site" evidence="1">
    <location>
        <position position="192"/>
    </location>
    <ligand>
        <name>NADP(+)</name>
        <dbReference type="ChEBI" id="CHEBI:58349"/>
    </ligand>
</feature>
<protein>
    <recommendedName>
        <fullName evidence="1">GDP-mannose 4,6-dehydratase</fullName>
        <ecNumber evidence="1">4.2.1.47</ecNumber>
    </recommendedName>
    <alternativeName>
        <fullName evidence="1">GDP-D-mannose dehydratase</fullName>
    </alternativeName>
</protein>
<keyword id="KW-0456">Lyase</keyword>
<keyword id="KW-0521">NADP</keyword>
<keyword id="KW-1185">Reference proteome</keyword>
<accession>P0AC91</accession>
<accession>P32054</accession>
<accession>P77687</accession>
<dbReference type="EC" id="4.2.1.47" evidence="1"/>
<dbReference type="EMBL" id="AE005674">
    <property type="protein sequence ID" value="AAN43655.1"/>
    <property type="molecule type" value="Genomic_DNA"/>
</dbReference>
<dbReference type="EMBL" id="AE014073">
    <property type="protein sequence ID" value="AAP17484.1"/>
    <property type="molecule type" value="Genomic_DNA"/>
</dbReference>
<dbReference type="RefSeq" id="NP_707948.1">
    <property type="nucleotide sequence ID" value="NC_004337.2"/>
</dbReference>
<dbReference type="RefSeq" id="WP_000048190.1">
    <property type="nucleotide sequence ID" value="NZ_WPGW01000076.1"/>
</dbReference>
<dbReference type="SMR" id="P0AC91"/>
<dbReference type="STRING" id="198214.SF2116"/>
<dbReference type="PaxDb" id="198214-SF2116"/>
<dbReference type="GeneID" id="1026781"/>
<dbReference type="GeneID" id="93775138"/>
<dbReference type="KEGG" id="sfl:SF2116"/>
<dbReference type="KEGG" id="sfx:S2239"/>
<dbReference type="PATRIC" id="fig|198214.7.peg.2524"/>
<dbReference type="HOGENOM" id="CLU_007383_14_0_6"/>
<dbReference type="UniPathway" id="UPA00128">
    <property type="reaction ID" value="UER00190"/>
</dbReference>
<dbReference type="Proteomes" id="UP000001006">
    <property type="component" value="Chromosome"/>
</dbReference>
<dbReference type="Proteomes" id="UP000002673">
    <property type="component" value="Chromosome"/>
</dbReference>
<dbReference type="GO" id="GO:0008446">
    <property type="term" value="F:GDP-mannose 4,6-dehydratase activity"/>
    <property type="evidence" value="ECO:0007669"/>
    <property type="project" value="UniProtKB-UniRule"/>
</dbReference>
<dbReference type="GO" id="GO:0070401">
    <property type="term" value="F:NADP+ binding"/>
    <property type="evidence" value="ECO:0007669"/>
    <property type="project" value="UniProtKB-UniRule"/>
</dbReference>
<dbReference type="GO" id="GO:0042351">
    <property type="term" value="P:'de novo' GDP-L-fucose biosynthetic process"/>
    <property type="evidence" value="ECO:0007669"/>
    <property type="project" value="UniProtKB-UniPathway"/>
</dbReference>
<dbReference type="CDD" id="cd05260">
    <property type="entry name" value="GDP_MD_SDR_e"/>
    <property type="match status" value="1"/>
</dbReference>
<dbReference type="FunFam" id="3.40.50.720:FF:000924">
    <property type="entry name" value="GDP-mannose 4,6 dehydratase"/>
    <property type="match status" value="1"/>
</dbReference>
<dbReference type="Gene3D" id="3.40.50.720">
    <property type="entry name" value="NAD(P)-binding Rossmann-like Domain"/>
    <property type="match status" value="1"/>
</dbReference>
<dbReference type="Gene3D" id="3.90.25.10">
    <property type="entry name" value="UDP-galactose 4-epimerase, domain 1"/>
    <property type="match status" value="1"/>
</dbReference>
<dbReference type="HAMAP" id="MF_00955">
    <property type="entry name" value="GDP_Man_dehydratase"/>
    <property type="match status" value="1"/>
</dbReference>
<dbReference type="InterPro" id="IPR006368">
    <property type="entry name" value="GDP_Man_deHydtase"/>
</dbReference>
<dbReference type="InterPro" id="IPR016040">
    <property type="entry name" value="NAD(P)-bd_dom"/>
</dbReference>
<dbReference type="InterPro" id="IPR036291">
    <property type="entry name" value="NAD(P)-bd_dom_sf"/>
</dbReference>
<dbReference type="NCBIfam" id="TIGR01472">
    <property type="entry name" value="gmd"/>
    <property type="match status" value="1"/>
</dbReference>
<dbReference type="PANTHER" id="PTHR43715:SF1">
    <property type="entry name" value="GDP-MANNOSE 4,6 DEHYDRATASE"/>
    <property type="match status" value="1"/>
</dbReference>
<dbReference type="PANTHER" id="PTHR43715">
    <property type="entry name" value="GDP-MANNOSE 4,6-DEHYDRATASE"/>
    <property type="match status" value="1"/>
</dbReference>
<dbReference type="Pfam" id="PF16363">
    <property type="entry name" value="GDP_Man_Dehyd"/>
    <property type="match status" value="1"/>
</dbReference>
<dbReference type="SUPFAM" id="SSF51735">
    <property type="entry name" value="NAD(P)-binding Rossmann-fold domains"/>
    <property type="match status" value="1"/>
</dbReference>
<proteinExistence type="inferred from homology"/>
<name>GM4D_SHIFL</name>
<comment type="function">
    <text evidence="1">Catalyzes the conversion of GDP-D-mannose to GDP-4-dehydro-6-deoxy-D-mannose.</text>
</comment>
<comment type="catalytic activity">
    <reaction evidence="1">
        <text>GDP-alpha-D-mannose = GDP-4-dehydro-alpha-D-rhamnose + H2O</text>
        <dbReference type="Rhea" id="RHEA:23820"/>
        <dbReference type="ChEBI" id="CHEBI:15377"/>
        <dbReference type="ChEBI" id="CHEBI:57527"/>
        <dbReference type="ChEBI" id="CHEBI:57964"/>
        <dbReference type="EC" id="4.2.1.47"/>
    </reaction>
</comment>
<comment type="cofactor">
    <cofactor evidence="1">
        <name>NADP(+)</name>
        <dbReference type="ChEBI" id="CHEBI:58349"/>
    </cofactor>
</comment>
<comment type="pathway">
    <text>Nucleotide-sugar biosynthesis; GDP-L-fucose biosynthesis via de novo pathway; GDP-L-fucose from GDP-alpha-D-mannose: step 1/2.</text>
</comment>
<comment type="similarity">
    <text evidence="1">Belongs to the NAD(P)-dependent epimerase/dehydratase family. GDP-mannose 4,6-dehydratase subfamily.</text>
</comment>
<organism>
    <name type="scientific">Shigella flexneri</name>
    <dbReference type="NCBI Taxonomy" id="623"/>
    <lineage>
        <taxon>Bacteria</taxon>
        <taxon>Pseudomonadati</taxon>
        <taxon>Pseudomonadota</taxon>
        <taxon>Gammaproteobacteria</taxon>
        <taxon>Enterobacterales</taxon>
        <taxon>Enterobacteriaceae</taxon>
        <taxon>Shigella</taxon>
    </lineage>
</organism>
<sequence length="373" mass="42047">MSKVALITGVTGQDGSYLAEFLLEKGYEVHGIKRRASSFNTERVDHIYQDPHTCNPKFHLHYGDLSDTSNLTRILREVQPDEVYNLGAMSHVAVSFESPEYTADVDAMGTLRLLEAIRFLGLEKKTRFYQASTSELYGLVQEIPQKETTPFYPRSPYAVAKLYAYWITVNYRESYGMYACNGILFNHESPRRGETFVTRKITRAIANIAQGLESCLYLGNMDSLRDWGHAKDYVKMQWMMLQQEQPEDFVIATGVQYSVRQFVEMAAAQLGIKLRFEGTGVEEKGIVVSVTGHDAPGVKPGDVIIAVDPRYFRPAEVETLLGDPTKAHEKLGWKPEITLREMVSEMVANDLEAAKKHSLLKSHGYDVAIALES</sequence>
<evidence type="ECO:0000255" key="1">
    <source>
        <dbReference type="HAMAP-Rule" id="MF_00955"/>
    </source>
</evidence>